<comment type="similarity">
    <text evidence="1">Belongs to the CCDC22 family.</text>
</comment>
<name>CCD22_CULQU</name>
<dbReference type="EMBL" id="DS232092">
    <property type="protein sequence ID" value="EDS34636.1"/>
    <property type="molecule type" value="Genomic_DNA"/>
</dbReference>
<dbReference type="RefSeq" id="XP_001855886.1">
    <property type="nucleotide sequence ID" value="XM_001855840.1"/>
</dbReference>
<dbReference type="SMR" id="B0WTU5"/>
<dbReference type="FunCoup" id="B0WTU5">
    <property type="interactions" value="1537"/>
</dbReference>
<dbReference type="STRING" id="7176.B0WTU5"/>
<dbReference type="EnsemblMetazoa" id="CPIJ010681-RA">
    <property type="protein sequence ID" value="CPIJ010681-PA"/>
    <property type="gene ID" value="CPIJ010681"/>
</dbReference>
<dbReference type="KEGG" id="cqu:CpipJ_CPIJ010681"/>
<dbReference type="VEuPathDB" id="VectorBase:CPIJ010681"/>
<dbReference type="VEuPathDB" id="VectorBase:CQUJHB000482"/>
<dbReference type="eggNOG" id="KOG1937">
    <property type="taxonomic scope" value="Eukaryota"/>
</dbReference>
<dbReference type="HOGENOM" id="CLU_024231_1_0_1"/>
<dbReference type="InParanoid" id="B0WTU5"/>
<dbReference type="OMA" id="KFEQHIQ"/>
<dbReference type="OrthoDB" id="10266736at2759"/>
<dbReference type="PhylomeDB" id="B0WTU5"/>
<dbReference type="Proteomes" id="UP000002320">
    <property type="component" value="Unassembled WGS sequence"/>
</dbReference>
<dbReference type="GO" id="GO:0097602">
    <property type="term" value="F:cullin family protein binding"/>
    <property type="evidence" value="ECO:0007669"/>
    <property type="project" value="TreeGrafter"/>
</dbReference>
<dbReference type="GO" id="GO:2000060">
    <property type="term" value="P:positive regulation of ubiquitin-dependent protein catabolic process"/>
    <property type="evidence" value="ECO:0007669"/>
    <property type="project" value="TreeGrafter"/>
</dbReference>
<dbReference type="InterPro" id="IPR008530">
    <property type="entry name" value="CCDC22"/>
</dbReference>
<dbReference type="InterPro" id="IPR048348">
    <property type="entry name" value="CCDC22_CC"/>
</dbReference>
<dbReference type="InterPro" id="IPR048349">
    <property type="entry name" value="CCDC22_N"/>
</dbReference>
<dbReference type="PANTHER" id="PTHR15668:SF4">
    <property type="entry name" value="COILED-COIL DOMAIN-CONTAINING PROTEIN 22"/>
    <property type="match status" value="1"/>
</dbReference>
<dbReference type="PANTHER" id="PTHR15668">
    <property type="entry name" value="JM1 PROTEIN"/>
    <property type="match status" value="1"/>
</dbReference>
<dbReference type="Pfam" id="PF05667">
    <property type="entry name" value="CCDC22_CC"/>
    <property type="match status" value="1"/>
</dbReference>
<dbReference type="Pfam" id="PF21674">
    <property type="entry name" value="CCDC22_N"/>
    <property type="match status" value="1"/>
</dbReference>
<sequence length="571" mass="64286">MDEIDNIILHSLRQIGCTLDDEVTSLDEFSPTLLVQVVSKCITLIDSSLDLPRTLPPGMAQRFTATASLAEACRTIGYRRDIGYQTFLYSNVAEVRRVLMFLIERLPKESADKAAGTGQPLDVTTELESRICASLQSQLQAPWMPEFCRTAAGPSSSQIAFRRFVPRKLNIPFVTQGDIAAEVKEFWSRQASLDTLDEDSFIPSVIAANDGALKASGGAIDEVDRIKVCSPVDRLQRFYTSSEQKSSVVPVGKVAVEEKLDALAIVEAARPGKTPLESLQEEIDQIRVEIERAVGEGTGLEGERMEVVELCEVQRAAVGKLKDEKKIKERTHILLEDPEVNVRKLQGIIGAGGERMKKLQDQWDVHRIPLEQELEGYRVKHSDKLSQSQQIVDQIEATRHKSEEVMMDLQTKSAMHARLQKELEKLNRTVSRTAYTSRILEIVGNIRKQKTDIDKILQDTRTLQKEINTITGQLDRQFTVTDDLIFRNAKKDEHAKKAYKLLVTLHSDCAELMALVQETGAVKREIRDLEDQIETERSRNTAANLAQICRDLAEMQSESQRLEESLRAHLR</sequence>
<protein>
    <recommendedName>
        <fullName>Coiled-coil domain-containing protein 22 homolog</fullName>
    </recommendedName>
</protein>
<gene>
    <name type="ORF">CPIJ010681</name>
</gene>
<accession>B0WTU5</accession>
<reference evidence="2" key="1">
    <citation type="submission" date="2007-03" db="EMBL/GenBank/DDBJ databases">
        <title>Annotation of Culex pipiens quinquefasciatus.</title>
        <authorList>
            <consortium name="The Broad Institute Genome Sequencing Platform"/>
            <person name="Atkinson P.W."/>
            <person name="Hemingway J."/>
            <person name="Christensen B.M."/>
            <person name="Higgs S."/>
            <person name="Kodira C.D."/>
            <person name="Hannick L.I."/>
            <person name="Megy K."/>
            <person name="O'Leary S.B."/>
            <person name="Pearson M."/>
            <person name="Haas B.J."/>
            <person name="Mauceli E."/>
            <person name="Wortman J.R."/>
            <person name="Lee N.H."/>
            <person name="Guigo R."/>
            <person name="Stanke M."/>
            <person name="Alvarado L."/>
            <person name="Amedeo P."/>
            <person name="Antoine C.H."/>
            <person name="Arensburger P."/>
            <person name="Bidwell S.L."/>
            <person name="Crawford M."/>
            <person name="Camaro F."/>
            <person name="Devon K."/>
            <person name="Engels R."/>
            <person name="Hammond M."/>
            <person name="Howarth C."/>
            <person name="Koehrsen M."/>
            <person name="Lawson D."/>
            <person name="Montgomery P."/>
            <person name="Nene V."/>
            <person name="Nusbaum C."/>
            <person name="Puiu D."/>
            <person name="Romero-Severson J."/>
            <person name="Severson D.W."/>
            <person name="Shumway M."/>
            <person name="Sisk P."/>
            <person name="Stolte C."/>
            <person name="Zeng Q."/>
            <person name="Eisenstadt E."/>
            <person name="Fraser-Liggett C.M."/>
            <person name="Strausberg R."/>
            <person name="Galagan J."/>
            <person name="Birren B."/>
            <person name="Collins F.H."/>
        </authorList>
    </citation>
    <scope>NUCLEOTIDE SEQUENCE [LARGE SCALE GENOMIC DNA]</scope>
    <source>
        <strain evidence="2">JHB</strain>
    </source>
</reference>
<organism>
    <name type="scientific">Culex quinquefasciatus</name>
    <name type="common">Southern house mosquito</name>
    <name type="synonym">Culex pungens</name>
    <dbReference type="NCBI Taxonomy" id="7176"/>
    <lineage>
        <taxon>Eukaryota</taxon>
        <taxon>Metazoa</taxon>
        <taxon>Ecdysozoa</taxon>
        <taxon>Arthropoda</taxon>
        <taxon>Hexapoda</taxon>
        <taxon>Insecta</taxon>
        <taxon>Pterygota</taxon>
        <taxon>Neoptera</taxon>
        <taxon>Endopterygota</taxon>
        <taxon>Diptera</taxon>
        <taxon>Nematocera</taxon>
        <taxon>Culicoidea</taxon>
        <taxon>Culicidae</taxon>
        <taxon>Culicinae</taxon>
        <taxon>Culicini</taxon>
        <taxon>Culex</taxon>
        <taxon>Culex</taxon>
    </lineage>
</organism>
<evidence type="ECO:0000255" key="1"/>
<evidence type="ECO:0000312" key="2">
    <source>
        <dbReference type="EMBL" id="EDS34636.1"/>
    </source>
</evidence>
<feature type="chain" id="PRO_0000347257" description="Coiled-coil domain-containing protein 22 homolog">
    <location>
        <begin position="1"/>
        <end position="571"/>
    </location>
</feature>
<feature type="coiled-coil region" evidence="1">
    <location>
        <begin position="406"/>
        <end position="434"/>
    </location>
</feature>
<feature type="coiled-coil region" evidence="1">
    <location>
        <begin position="509"/>
        <end position="571"/>
    </location>
</feature>
<keyword id="KW-0175">Coiled coil</keyword>
<keyword id="KW-1185">Reference proteome</keyword>
<proteinExistence type="inferred from homology"/>